<reference key="1">
    <citation type="journal article" date="2007" name="J. Bacteriol.">
        <title>Complete genome sequence of Haemophilus somnus (Histophilus somni) strain 129Pt and comparison to Haemophilus ducreyi 35000HP and Haemophilus influenzae Rd.</title>
        <authorList>
            <person name="Challacombe J.F."/>
            <person name="Duncan A.J."/>
            <person name="Brettin T.S."/>
            <person name="Bruce D."/>
            <person name="Chertkov O."/>
            <person name="Detter J.C."/>
            <person name="Han C.S."/>
            <person name="Misra M."/>
            <person name="Richardson P."/>
            <person name="Tapia R."/>
            <person name="Thayer N."/>
            <person name="Xie G."/>
            <person name="Inzana T.J."/>
        </authorList>
    </citation>
    <scope>NUCLEOTIDE SEQUENCE [LARGE SCALE GENOMIC DNA]</scope>
    <source>
        <strain>129Pt</strain>
    </source>
</reference>
<comment type="function">
    <text evidence="1">Catalyzes the conversion of glucosamine-6-phosphate to glucosamine-1-phosphate.</text>
</comment>
<comment type="catalytic activity">
    <reaction evidence="1">
        <text>alpha-D-glucosamine 1-phosphate = D-glucosamine 6-phosphate</text>
        <dbReference type="Rhea" id="RHEA:23424"/>
        <dbReference type="ChEBI" id="CHEBI:58516"/>
        <dbReference type="ChEBI" id="CHEBI:58725"/>
        <dbReference type="EC" id="5.4.2.10"/>
    </reaction>
</comment>
<comment type="cofactor">
    <cofactor evidence="1">
        <name>Mg(2+)</name>
        <dbReference type="ChEBI" id="CHEBI:18420"/>
    </cofactor>
    <text evidence="1">Binds 1 Mg(2+) ion per subunit.</text>
</comment>
<comment type="PTM">
    <text evidence="1">Activated by phosphorylation.</text>
</comment>
<comment type="similarity">
    <text evidence="1">Belongs to the phosphohexose mutase family.</text>
</comment>
<name>GLMM_HISS1</name>
<proteinExistence type="inferred from homology"/>
<evidence type="ECO:0000255" key="1">
    <source>
        <dbReference type="HAMAP-Rule" id="MF_01554"/>
    </source>
</evidence>
<dbReference type="EC" id="5.4.2.10" evidence="1"/>
<dbReference type="EMBL" id="CP000436">
    <property type="protein sequence ID" value="ABI25005.1"/>
    <property type="molecule type" value="Genomic_DNA"/>
</dbReference>
<dbReference type="SMR" id="Q0I2Q5"/>
<dbReference type="KEGG" id="hso:HS_0730"/>
<dbReference type="eggNOG" id="COG1109">
    <property type="taxonomic scope" value="Bacteria"/>
</dbReference>
<dbReference type="HOGENOM" id="CLU_016950_7_0_6"/>
<dbReference type="GO" id="GO:0005829">
    <property type="term" value="C:cytosol"/>
    <property type="evidence" value="ECO:0007669"/>
    <property type="project" value="TreeGrafter"/>
</dbReference>
<dbReference type="GO" id="GO:0000287">
    <property type="term" value="F:magnesium ion binding"/>
    <property type="evidence" value="ECO:0007669"/>
    <property type="project" value="UniProtKB-UniRule"/>
</dbReference>
<dbReference type="GO" id="GO:0008966">
    <property type="term" value="F:phosphoglucosamine mutase activity"/>
    <property type="evidence" value="ECO:0007669"/>
    <property type="project" value="UniProtKB-UniRule"/>
</dbReference>
<dbReference type="GO" id="GO:0004615">
    <property type="term" value="F:phosphomannomutase activity"/>
    <property type="evidence" value="ECO:0007669"/>
    <property type="project" value="TreeGrafter"/>
</dbReference>
<dbReference type="GO" id="GO:0005975">
    <property type="term" value="P:carbohydrate metabolic process"/>
    <property type="evidence" value="ECO:0007669"/>
    <property type="project" value="InterPro"/>
</dbReference>
<dbReference type="GO" id="GO:0009252">
    <property type="term" value="P:peptidoglycan biosynthetic process"/>
    <property type="evidence" value="ECO:0007669"/>
    <property type="project" value="TreeGrafter"/>
</dbReference>
<dbReference type="GO" id="GO:0006048">
    <property type="term" value="P:UDP-N-acetylglucosamine biosynthetic process"/>
    <property type="evidence" value="ECO:0007669"/>
    <property type="project" value="TreeGrafter"/>
</dbReference>
<dbReference type="CDD" id="cd05802">
    <property type="entry name" value="GlmM"/>
    <property type="match status" value="1"/>
</dbReference>
<dbReference type="FunFam" id="3.30.310.50:FF:000001">
    <property type="entry name" value="Phosphoglucosamine mutase"/>
    <property type="match status" value="1"/>
</dbReference>
<dbReference type="FunFam" id="3.40.120.10:FF:000001">
    <property type="entry name" value="Phosphoglucosamine mutase"/>
    <property type="match status" value="1"/>
</dbReference>
<dbReference type="FunFam" id="3.40.120.10:FF:000002">
    <property type="entry name" value="Phosphoglucosamine mutase"/>
    <property type="match status" value="1"/>
</dbReference>
<dbReference type="Gene3D" id="3.40.120.10">
    <property type="entry name" value="Alpha-D-Glucose-1,6-Bisphosphate, subunit A, domain 3"/>
    <property type="match status" value="3"/>
</dbReference>
<dbReference type="Gene3D" id="3.30.310.50">
    <property type="entry name" value="Alpha-D-phosphohexomutase, C-terminal domain"/>
    <property type="match status" value="1"/>
</dbReference>
<dbReference type="HAMAP" id="MF_01554_B">
    <property type="entry name" value="GlmM_B"/>
    <property type="match status" value="1"/>
</dbReference>
<dbReference type="InterPro" id="IPR005844">
    <property type="entry name" value="A-D-PHexomutase_a/b/a-I"/>
</dbReference>
<dbReference type="InterPro" id="IPR016055">
    <property type="entry name" value="A-D-PHexomutase_a/b/a-I/II/III"/>
</dbReference>
<dbReference type="InterPro" id="IPR005845">
    <property type="entry name" value="A-D-PHexomutase_a/b/a-II"/>
</dbReference>
<dbReference type="InterPro" id="IPR005846">
    <property type="entry name" value="A-D-PHexomutase_a/b/a-III"/>
</dbReference>
<dbReference type="InterPro" id="IPR005843">
    <property type="entry name" value="A-D-PHexomutase_C"/>
</dbReference>
<dbReference type="InterPro" id="IPR036900">
    <property type="entry name" value="A-D-PHexomutase_C_sf"/>
</dbReference>
<dbReference type="InterPro" id="IPR016066">
    <property type="entry name" value="A-D-PHexomutase_CS"/>
</dbReference>
<dbReference type="InterPro" id="IPR005841">
    <property type="entry name" value="Alpha-D-phosphohexomutase_SF"/>
</dbReference>
<dbReference type="InterPro" id="IPR006352">
    <property type="entry name" value="GlmM_bact"/>
</dbReference>
<dbReference type="InterPro" id="IPR050060">
    <property type="entry name" value="Phosphoglucosamine_mutase"/>
</dbReference>
<dbReference type="NCBIfam" id="TIGR01455">
    <property type="entry name" value="glmM"/>
    <property type="match status" value="1"/>
</dbReference>
<dbReference type="NCBIfam" id="NF008139">
    <property type="entry name" value="PRK10887.1"/>
    <property type="match status" value="1"/>
</dbReference>
<dbReference type="PANTHER" id="PTHR42946:SF1">
    <property type="entry name" value="PHOSPHOGLUCOMUTASE (ALPHA-D-GLUCOSE-1,6-BISPHOSPHATE-DEPENDENT)"/>
    <property type="match status" value="1"/>
</dbReference>
<dbReference type="PANTHER" id="PTHR42946">
    <property type="entry name" value="PHOSPHOHEXOSE MUTASE"/>
    <property type="match status" value="1"/>
</dbReference>
<dbReference type="Pfam" id="PF02878">
    <property type="entry name" value="PGM_PMM_I"/>
    <property type="match status" value="1"/>
</dbReference>
<dbReference type="Pfam" id="PF02879">
    <property type="entry name" value="PGM_PMM_II"/>
    <property type="match status" value="1"/>
</dbReference>
<dbReference type="Pfam" id="PF02880">
    <property type="entry name" value="PGM_PMM_III"/>
    <property type="match status" value="1"/>
</dbReference>
<dbReference type="Pfam" id="PF00408">
    <property type="entry name" value="PGM_PMM_IV"/>
    <property type="match status" value="1"/>
</dbReference>
<dbReference type="PRINTS" id="PR00509">
    <property type="entry name" value="PGMPMM"/>
</dbReference>
<dbReference type="SUPFAM" id="SSF55957">
    <property type="entry name" value="Phosphoglucomutase, C-terminal domain"/>
    <property type="match status" value="1"/>
</dbReference>
<dbReference type="SUPFAM" id="SSF53738">
    <property type="entry name" value="Phosphoglucomutase, first 3 domains"/>
    <property type="match status" value="3"/>
</dbReference>
<dbReference type="PROSITE" id="PS00710">
    <property type="entry name" value="PGM_PMM"/>
    <property type="match status" value="1"/>
</dbReference>
<protein>
    <recommendedName>
        <fullName evidence="1">Phosphoglucosamine mutase</fullName>
        <ecNumber evidence="1">5.4.2.10</ecNumber>
    </recommendedName>
</protein>
<sequence length="444" mass="47479">MAERKYFGTDGVRGKVGSYPITPDFVLKLGWAAGKVLATQGTGKVLIGKDTRISGYMLESALEAGLAAAGLSAAFTGPMPTPAIAYLTRTFRSEAGIVISASHNPFYDNGIKFFSAQGTKLPDDVEEAIEAMLEQPMDCVESAKLGRASRINDAAGRYIEFCKSTFPAHLSLDKYKIVVDCANGATYHIAPNVMRELGAEVIEIGTQPDGMNINENCGATDIKALQNKVLETKADIGLAYDGDGDRLIMVDHFGNKVDGDQILFIIAREALRSGNLKGGVVGTLMSNMSLELALKQLGIPFVRANVGDRYVLEKMQEYNWILGGENSGHIIIADKNTTGDGVIASLAVLAAMVQHKLSLNELASAVKLFPQVLINVRFAGGANPLESDAVKAVATEVEKQLAGKGRILLRKSGTEPLIRVMVECEDAELAQLSAEKIAEAVRSN</sequence>
<accession>Q0I2Q5</accession>
<organism>
    <name type="scientific">Histophilus somni (strain 129Pt)</name>
    <name type="common">Haemophilus somnus</name>
    <dbReference type="NCBI Taxonomy" id="205914"/>
    <lineage>
        <taxon>Bacteria</taxon>
        <taxon>Pseudomonadati</taxon>
        <taxon>Pseudomonadota</taxon>
        <taxon>Gammaproteobacteria</taxon>
        <taxon>Pasteurellales</taxon>
        <taxon>Pasteurellaceae</taxon>
        <taxon>Histophilus</taxon>
    </lineage>
</organism>
<gene>
    <name evidence="1" type="primary">glmM</name>
    <name type="ordered locus">HS_0730</name>
</gene>
<feature type="chain" id="PRO_0000301322" description="Phosphoglucosamine mutase">
    <location>
        <begin position="1"/>
        <end position="444"/>
    </location>
</feature>
<feature type="active site" description="Phosphoserine intermediate" evidence="1">
    <location>
        <position position="102"/>
    </location>
</feature>
<feature type="binding site" description="via phosphate group" evidence="1">
    <location>
        <position position="102"/>
    </location>
    <ligand>
        <name>Mg(2+)</name>
        <dbReference type="ChEBI" id="CHEBI:18420"/>
    </ligand>
</feature>
<feature type="binding site" evidence="1">
    <location>
        <position position="241"/>
    </location>
    <ligand>
        <name>Mg(2+)</name>
        <dbReference type="ChEBI" id="CHEBI:18420"/>
    </ligand>
</feature>
<feature type="binding site" evidence="1">
    <location>
        <position position="243"/>
    </location>
    <ligand>
        <name>Mg(2+)</name>
        <dbReference type="ChEBI" id="CHEBI:18420"/>
    </ligand>
</feature>
<feature type="binding site" evidence="1">
    <location>
        <position position="245"/>
    </location>
    <ligand>
        <name>Mg(2+)</name>
        <dbReference type="ChEBI" id="CHEBI:18420"/>
    </ligand>
</feature>
<feature type="modified residue" description="Phosphoserine" evidence="1">
    <location>
        <position position="102"/>
    </location>
</feature>
<keyword id="KW-0413">Isomerase</keyword>
<keyword id="KW-0460">Magnesium</keyword>
<keyword id="KW-0479">Metal-binding</keyword>
<keyword id="KW-0597">Phosphoprotein</keyword>